<evidence type="ECO:0000255" key="1">
    <source>
        <dbReference type="PROSITE-ProRule" id="PRU00798"/>
    </source>
</evidence>
<protein>
    <recommendedName>
        <fullName>Ovomucoid</fullName>
    </recommendedName>
</protein>
<dbReference type="PIR" id="C31441">
    <property type="entry name" value="C31441"/>
</dbReference>
<dbReference type="SMR" id="P67895"/>
<dbReference type="GO" id="GO:0005576">
    <property type="term" value="C:extracellular region"/>
    <property type="evidence" value="ECO:0007669"/>
    <property type="project" value="UniProtKB-SubCell"/>
</dbReference>
<dbReference type="GO" id="GO:0004867">
    <property type="term" value="F:serine-type endopeptidase inhibitor activity"/>
    <property type="evidence" value="ECO:0007669"/>
    <property type="project" value="UniProtKB-KW"/>
</dbReference>
<dbReference type="CDD" id="cd00104">
    <property type="entry name" value="KAZAL_FS"/>
    <property type="match status" value="1"/>
</dbReference>
<dbReference type="FunFam" id="3.30.60.30:FF:000037">
    <property type="entry name" value="Ovomucoid"/>
    <property type="match status" value="1"/>
</dbReference>
<dbReference type="Gene3D" id="3.30.60.30">
    <property type="match status" value="1"/>
</dbReference>
<dbReference type="InterPro" id="IPR051597">
    <property type="entry name" value="Bifunctional_prot_inhibitor"/>
</dbReference>
<dbReference type="InterPro" id="IPR002350">
    <property type="entry name" value="Kazal_dom"/>
</dbReference>
<dbReference type="InterPro" id="IPR036058">
    <property type="entry name" value="Kazal_dom_sf"/>
</dbReference>
<dbReference type="PANTHER" id="PTHR47729:SF1">
    <property type="entry name" value="OVOMUCOID-LIKE-RELATED"/>
    <property type="match status" value="1"/>
</dbReference>
<dbReference type="PANTHER" id="PTHR47729">
    <property type="entry name" value="SERINE PEPTIDASE INHIBITOR, KAZAL TYPE 2, TANDEM DUPLICATE 1-RELATED"/>
    <property type="match status" value="1"/>
</dbReference>
<dbReference type="Pfam" id="PF00050">
    <property type="entry name" value="Kazal_1"/>
    <property type="match status" value="1"/>
</dbReference>
<dbReference type="SMART" id="SM00280">
    <property type="entry name" value="KAZAL"/>
    <property type="match status" value="1"/>
</dbReference>
<dbReference type="SUPFAM" id="SSF100895">
    <property type="entry name" value="Kazal-type serine protease inhibitors"/>
    <property type="match status" value="1"/>
</dbReference>
<dbReference type="PROSITE" id="PS00282">
    <property type="entry name" value="KAZAL_1"/>
    <property type="match status" value="1"/>
</dbReference>
<dbReference type="PROSITE" id="PS51465">
    <property type="entry name" value="KAZAL_2"/>
    <property type="match status" value="1"/>
</dbReference>
<sequence length="56" mass="6049">FAPVNVDCSDHPKPACLQEQKPLCGSDNKTYDNKCSFCNAVVDSNGTLTLSHFGKC</sequence>
<organism>
    <name type="scientific">Penelope jacquacu</name>
    <name type="common">Spix's guan</name>
    <dbReference type="NCBI Taxonomy" id="8986"/>
    <lineage>
        <taxon>Eukaryota</taxon>
        <taxon>Metazoa</taxon>
        <taxon>Chordata</taxon>
        <taxon>Craniata</taxon>
        <taxon>Vertebrata</taxon>
        <taxon>Euteleostomi</taxon>
        <taxon>Archelosauria</taxon>
        <taxon>Archosauria</taxon>
        <taxon>Dinosauria</taxon>
        <taxon>Saurischia</taxon>
        <taxon>Theropoda</taxon>
        <taxon>Coelurosauria</taxon>
        <taxon>Aves</taxon>
        <taxon>Neognathae</taxon>
        <taxon>Galloanserae</taxon>
        <taxon>Galliformes</taxon>
        <taxon>Cracidae</taxon>
        <taxon>Penelope</taxon>
    </lineage>
</organism>
<feature type="chain" id="PRO_0000073158" description="Ovomucoid">
    <location>
        <begin position="1" status="less than"/>
        <end position="56" status="greater than"/>
    </location>
</feature>
<feature type="domain" description="Kazal-like" evidence="1">
    <location>
        <begin position="6"/>
        <end position="56"/>
    </location>
</feature>
<feature type="site" description="Reactive bond 3">
    <location>
        <begin position="18"/>
        <end position="19"/>
    </location>
</feature>
<feature type="glycosylation site" description="N-linked (GlcNAc...) asparagine">
    <location>
        <position position="45"/>
    </location>
</feature>
<feature type="disulfide bond">
    <location>
        <begin position="8"/>
        <end position="38"/>
    </location>
</feature>
<feature type="disulfide bond">
    <location>
        <begin position="16"/>
        <end position="35"/>
    </location>
</feature>
<feature type="disulfide bond">
    <location>
        <begin position="24"/>
        <end position="56"/>
    </location>
</feature>
<feature type="non-terminal residue">
    <location>
        <position position="1"/>
    </location>
</feature>
<feature type="non-terminal residue">
    <location>
        <position position="56"/>
    </location>
</feature>
<keyword id="KW-0903">Direct protein sequencing</keyword>
<keyword id="KW-1015">Disulfide bond</keyword>
<keyword id="KW-0325">Glycoprotein</keyword>
<keyword id="KW-0646">Protease inhibitor</keyword>
<keyword id="KW-0677">Repeat</keyword>
<keyword id="KW-0964">Secreted</keyword>
<keyword id="KW-0722">Serine protease inhibitor</keyword>
<reference key="1">
    <citation type="journal article" date="1987" name="Biochemistry">
        <title>Ovomucoid third domains from 100 avian species: isolation, sequences, and hypervariability of enzyme-inhibitor contact residues.</title>
        <authorList>
            <person name="Laskowski M. Jr."/>
            <person name="Kato I."/>
            <person name="Ardelt W."/>
            <person name="Cook J."/>
            <person name="Denton A."/>
            <person name="Empie M.W."/>
            <person name="Kohr W.J."/>
            <person name="Park S.J."/>
            <person name="Parks K."/>
            <person name="Schatzley B.L."/>
            <person name="Schoenberger O.L."/>
            <person name="Tashiro M."/>
            <person name="Vichot G."/>
            <person name="Whatley H.E."/>
            <person name="Wieczorek A."/>
            <person name="Wieczorek M."/>
        </authorList>
    </citation>
    <scope>PROTEIN SEQUENCE</scope>
</reference>
<accession>P67895</accession>
<accession>P05583</accession>
<name>IOVO_PENJC</name>
<proteinExistence type="evidence at protein level"/>
<comment type="subcellular location">
    <subcellularLocation>
        <location>Secreted</location>
    </subcellularLocation>
</comment>
<comment type="domain">
    <text>Avian ovomucoid consists of three homologous, tandem Kazal family inhibitory domains.</text>
</comment>